<gene>
    <name evidence="1" type="primary">rpsE</name>
    <name type="ordered locus">Hac_0152</name>
</gene>
<comment type="function">
    <text evidence="1">With S4 and S12 plays an important role in translational accuracy.</text>
</comment>
<comment type="function">
    <text evidence="1">Located at the back of the 30S subunit body where it stabilizes the conformation of the head with respect to the body.</text>
</comment>
<comment type="subunit">
    <text evidence="1">Part of the 30S ribosomal subunit. Contacts proteins S4 and S8.</text>
</comment>
<comment type="domain">
    <text>The N-terminal domain interacts with the head of the 30S subunit; the C-terminal domain interacts with the body and contacts protein S4. The interaction surface between S4 and S5 is involved in control of translational fidelity.</text>
</comment>
<comment type="similarity">
    <text evidence="1">Belongs to the universal ribosomal protein uS5 family.</text>
</comment>
<protein>
    <recommendedName>
        <fullName evidence="1">Small ribosomal subunit protein uS5</fullName>
    </recommendedName>
    <alternativeName>
        <fullName evidence="2">30S ribosomal protein S5</fullName>
    </alternativeName>
</protein>
<reference key="1">
    <citation type="journal article" date="2006" name="PLoS Genet.">
        <title>Who ate whom? Adaptive Helicobacter genomic changes that accompanied a host jump from early humans to large felines.</title>
        <authorList>
            <person name="Eppinger M."/>
            <person name="Baar C."/>
            <person name="Linz B."/>
            <person name="Raddatz G."/>
            <person name="Lanz C."/>
            <person name="Keller H."/>
            <person name="Morelli G."/>
            <person name="Gressmann H."/>
            <person name="Achtman M."/>
            <person name="Schuster S.C."/>
        </authorList>
    </citation>
    <scope>NUCLEOTIDE SEQUENCE [LARGE SCALE GENOMIC DNA]</scope>
    <source>
        <strain>Sheeba</strain>
    </source>
</reference>
<dbReference type="EMBL" id="AM260522">
    <property type="protein sequence ID" value="CAJ99004.1"/>
    <property type="molecule type" value="Genomic_DNA"/>
</dbReference>
<dbReference type="SMR" id="Q17ZC2"/>
<dbReference type="STRING" id="382638.Hac_0152"/>
<dbReference type="KEGG" id="hac:Hac_0152"/>
<dbReference type="eggNOG" id="COG0098">
    <property type="taxonomic scope" value="Bacteria"/>
</dbReference>
<dbReference type="HOGENOM" id="CLU_065898_2_2_7"/>
<dbReference type="Proteomes" id="UP000000775">
    <property type="component" value="Chromosome"/>
</dbReference>
<dbReference type="GO" id="GO:0015935">
    <property type="term" value="C:small ribosomal subunit"/>
    <property type="evidence" value="ECO:0007669"/>
    <property type="project" value="InterPro"/>
</dbReference>
<dbReference type="GO" id="GO:0019843">
    <property type="term" value="F:rRNA binding"/>
    <property type="evidence" value="ECO:0007669"/>
    <property type="project" value="UniProtKB-UniRule"/>
</dbReference>
<dbReference type="GO" id="GO:0003735">
    <property type="term" value="F:structural constituent of ribosome"/>
    <property type="evidence" value="ECO:0007669"/>
    <property type="project" value="InterPro"/>
</dbReference>
<dbReference type="GO" id="GO:0006412">
    <property type="term" value="P:translation"/>
    <property type="evidence" value="ECO:0007669"/>
    <property type="project" value="UniProtKB-UniRule"/>
</dbReference>
<dbReference type="FunFam" id="3.30.160.20:FF:000001">
    <property type="entry name" value="30S ribosomal protein S5"/>
    <property type="match status" value="1"/>
</dbReference>
<dbReference type="FunFam" id="3.30.230.10:FF:000024">
    <property type="entry name" value="30S ribosomal protein S5"/>
    <property type="match status" value="1"/>
</dbReference>
<dbReference type="Gene3D" id="3.30.160.20">
    <property type="match status" value="1"/>
</dbReference>
<dbReference type="Gene3D" id="3.30.230.10">
    <property type="match status" value="1"/>
</dbReference>
<dbReference type="HAMAP" id="MF_01307_B">
    <property type="entry name" value="Ribosomal_uS5_B"/>
    <property type="match status" value="1"/>
</dbReference>
<dbReference type="InterPro" id="IPR020568">
    <property type="entry name" value="Ribosomal_Su5_D2-typ_SF"/>
</dbReference>
<dbReference type="InterPro" id="IPR000851">
    <property type="entry name" value="Ribosomal_uS5"/>
</dbReference>
<dbReference type="InterPro" id="IPR005712">
    <property type="entry name" value="Ribosomal_uS5_bac-type"/>
</dbReference>
<dbReference type="InterPro" id="IPR005324">
    <property type="entry name" value="Ribosomal_uS5_C"/>
</dbReference>
<dbReference type="InterPro" id="IPR013810">
    <property type="entry name" value="Ribosomal_uS5_N"/>
</dbReference>
<dbReference type="InterPro" id="IPR018192">
    <property type="entry name" value="Ribosomal_uS5_N_CS"/>
</dbReference>
<dbReference type="InterPro" id="IPR014721">
    <property type="entry name" value="Ribsml_uS5_D2-typ_fold_subgr"/>
</dbReference>
<dbReference type="NCBIfam" id="TIGR01021">
    <property type="entry name" value="rpsE_bact"/>
    <property type="match status" value="1"/>
</dbReference>
<dbReference type="PANTHER" id="PTHR48277">
    <property type="entry name" value="MITOCHONDRIAL RIBOSOMAL PROTEIN S5"/>
    <property type="match status" value="1"/>
</dbReference>
<dbReference type="PANTHER" id="PTHR48277:SF1">
    <property type="entry name" value="MITOCHONDRIAL RIBOSOMAL PROTEIN S5"/>
    <property type="match status" value="1"/>
</dbReference>
<dbReference type="Pfam" id="PF00333">
    <property type="entry name" value="Ribosomal_S5"/>
    <property type="match status" value="1"/>
</dbReference>
<dbReference type="Pfam" id="PF03719">
    <property type="entry name" value="Ribosomal_S5_C"/>
    <property type="match status" value="1"/>
</dbReference>
<dbReference type="SUPFAM" id="SSF54768">
    <property type="entry name" value="dsRNA-binding domain-like"/>
    <property type="match status" value="1"/>
</dbReference>
<dbReference type="SUPFAM" id="SSF54211">
    <property type="entry name" value="Ribosomal protein S5 domain 2-like"/>
    <property type="match status" value="1"/>
</dbReference>
<dbReference type="PROSITE" id="PS00585">
    <property type="entry name" value="RIBOSOMAL_S5"/>
    <property type="match status" value="1"/>
</dbReference>
<dbReference type="PROSITE" id="PS50881">
    <property type="entry name" value="S5_DSRBD"/>
    <property type="match status" value="1"/>
</dbReference>
<organism>
    <name type="scientific">Helicobacter acinonychis (strain Sheeba)</name>
    <dbReference type="NCBI Taxonomy" id="382638"/>
    <lineage>
        <taxon>Bacteria</taxon>
        <taxon>Pseudomonadati</taxon>
        <taxon>Campylobacterota</taxon>
        <taxon>Epsilonproteobacteria</taxon>
        <taxon>Campylobacterales</taxon>
        <taxon>Helicobacteraceae</taxon>
        <taxon>Helicobacter</taxon>
    </lineage>
</organism>
<keyword id="KW-0687">Ribonucleoprotein</keyword>
<keyword id="KW-0689">Ribosomal protein</keyword>
<keyword id="KW-0694">RNA-binding</keyword>
<keyword id="KW-0699">rRNA-binding</keyword>
<proteinExistence type="inferred from homology"/>
<name>RS5_HELAH</name>
<evidence type="ECO:0000255" key="1">
    <source>
        <dbReference type="HAMAP-Rule" id="MF_01307"/>
    </source>
</evidence>
<evidence type="ECO:0000305" key="2"/>
<sequence>MTERKGMEEINREEFQEVVVNVGRVTKVVKGGRRFRFNALVVVGNKNGLVGFGLGKAKEVPDAIKKAVDDAFKNLIHVTIKGTTIAHDIEHKYNASRILLKPASEGTGVIAGGSTRPIVELAGIKDILTKSLGSNNPYNVVHATFDALAKIKA</sequence>
<feature type="chain" id="PRO_0000323134" description="Small ribosomal subunit protein uS5">
    <location>
        <begin position="1"/>
        <end position="153"/>
    </location>
</feature>
<feature type="domain" description="S5 DRBM" evidence="1">
    <location>
        <begin position="15"/>
        <end position="78"/>
    </location>
</feature>
<accession>Q17ZC2</accession>